<sequence>MWSAQLLSQLLPLWPLLLLSVLPPAQGSSHRSPPAPARPPCVRGGPSAPRHVCVWERAPPPSRSPRVPRSRRQVVPGTAPPATPSGFEEGPPSSQYPWAIVWGPTVSREDGGDPNSVNPGFLPLDYGFAAPHGLATPHPNSDSMRDDGDGLILGETPATLRPFLFGGRGEGVDPQLYVTITISIIIVLVATGIIFKFCWDRSQKRRRPSGQQGALRQEESQQPLTDLSPAGVTVLGAFGDSPTPTPDHEEPRGGPRPGMPQPKGAPAFQLNRIPLVNL</sequence>
<dbReference type="EMBL" id="AK082984">
    <property type="protein sequence ID" value="BAC38721.1"/>
    <property type="molecule type" value="mRNA"/>
</dbReference>
<dbReference type="EMBL" id="AK148352">
    <property type="protein sequence ID" value="BAE28500.1"/>
    <property type="molecule type" value="mRNA"/>
</dbReference>
<dbReference type="EMBL" id="BC065170">
    <property type="protein sequence ID" value="AAH65170.1"/>
    <property type="molecule type" value="mRNA"/>
</dbReference>
<dbReference type="EMBL" id="AF540035">
    <property type="protein sequence ID" value="AAQ11190.1"/>
    <property type="status" value="ALT_SEQ"/>
    <property type="molecule type" value="mRNA"/>
</dbReference>
<dbReference type="CCDS" id="CCDS20540.1"/>
<dbReference type="RefSeq" id="NP_001139398.1">
    <property type="nucleotide sequence ID" value="NM_001145926.1"/>
</dbReference>
<dbReference type="RefSeq" id="NP_001139399.1">
    <property type="nucleotide sequence ID" value="NM_001145927.1"/>
</dbReference>
<dbReference type="RefSeq" id="NP_783627.2">
    <property type="nucleotide sequence ID" value="NM_175696.4"/>
</dbReference>
<dbReference type="RefSeq" id="XP_006506297.1">
    <property type="nucleotide sequence ID" value="XM_006506234.4"/>
</dbReference>
<dbReference type="RefSeq" id="XP_006506299.1">
    <property type="nucleotide sequence ID" value="XM_006506236.4"/>
</dbReference>
<dbReference type="SMR" id="Q6P1B3"/>
<dbReference type="BioGRID" id="235222">
    <property type="interactions" value="1"/>
</dbReference>
<dbReference type="FunCoup" id="Q6P1B3">
    <property type="interactions" value="128"/>
</dbReference>
<dbReference type="STRING" id="10090.ENSMUSP00000032479"/>
<dbReference type="GlyCosmos" id="Q6P1B3">
    <property type="glycosylation" value="1 site, No reported glycans"/>
</dbReference>
<dbReference type="GlyGen" id="Q6P1B3">
    <property type="glycosylation" value="5 sites"/>
</dbReference>
<dbReference type="iPTMnet" id="Q6P1B3"/>
<dbReference type="PhosphoSitePlus" id="Q6P1B3"/>
<dbReference type="PaxDb" id="10090-ENSMUSP00000032479"/>
<dbReference type="PeptideAtlas" id="Q6P1B3"/>
<dbReference type="ProteomicsDB" id="301828"/>
<dbReference type="Pumba" id="Q6P1B3"/>
<dbReference type="Antibodypedia" id="22637">
    <property type="antibodies" value="102 antibodies from 16 providers"/>
</dbReference>
<dbReference type="DNASU" id="319352"/>
<dbReference type="Ensembl" id="ENSMUST00000032479.11">
    <property type="protein sequence ID" value="ENSMUSP00000032479.5"/>
    <property type="gene ID" value="ENSMUSG00000030329.12"/>
</dbReference>
<dbReference type="Ensembl" id="ENSMUST00000160704.8">
    <property type="protein sequence ID" value="ENSMUSP00000124160.2"/>
    <property type="gene ID" value="ENSMUSG00000030329.12"/>
</dbReference>
<dbReference type="Ensembl" id="ENSMUST00000162170.8">
    <property type="protein sequence ID" value="ENSMUSP00000123940.2"/>
    <property type="gene ID" value="ENSMUSG00000030329.12"/>
</dbReference>
<dbReference type="GeneID" id="319352"/>
<dbReference type="KEGG" id="mmu:319352"/>
<dbReference type="UCSC" id="uc009dst.3">
    <property type="organism name" value="mouse"/>
</dbReference>
<dbReference type="AGR" id="MGI:2441908"/>
<dbReference type="CTD" id="196500"/>
<dbReference type="MGI" id="MGI:2441908">
    <property type="gene designation" value="Pianp"/>
</dbReference>
<dbReference type="VEuPathDB" id="HostDB:ENSMUSG00000030329"/>
<dbReference type="eggNOG" id="ENOG502RH1H">
    <property type="taxonomic scope" value="Eukaryota"/>
</dbReference>
<dbReference type="GeneTree" id="ENSGT00510000049460"/>
<dbReference type="HOGENOM" id="CLU_089346_0_0_1"/>
<dbReference type="InParanoid" id="Q6P1B3"/>
<dbReference type="OMA" id="MEPSACR"/>
<dbReference type="OrthoDB" id="9934112at2759"/>
<dbReference type="PhylomeDB" id="Q6P1B3"/>
<dbReference type="TreeFam" id="TF336539"/>
<dbReference type="Reactome" id="R-MMU-198933">
    <property type="pathway name" value="Immunoregulatory interactions between a Lymphoid and a non-Lymphoid cell"/>
</dbReference>
<dbReference type="BioGRID-ORCS" id="319352">
    <property type="hits" value="2 hits in 78 CRISPR screens"/>
</dbReference>
<dbReference type="ChiTaRS" id="Pianp">
    <property type="organism name" value="mouse"/>
</dbReference>
<dbReference type="PRO" id="PR:Q6P1B3"/>
<dbReference type="Proteomes" id="UP000000589">
    <property type="component" value="Chromosome 6"/>
</dbReference>
<dbReference type="RNAct" id="Q6P1B3">
    <property type="molecule type" value="protein"/>
</dbReference>
<dbReference type="Bgee" id="ENSMUSG00000030329">
    <property type="expression patterns" value="Expressed in superior frontal gyrus and 133 other cell types or tissues"/>
</dbReference>
<dbReference type="ExpressionAtlas" id="Q6P1B3">
    <property type="expression patterns" value="baseline and differential"/>
</dbReference>
<dbReference type="GO" id="GO:0016323">
    <property type="term" value="C:basolateral plasma membrane"/>
    <property type="evidence" value="ECO:0000250"/>
    <property type="project" value="UniProtKB"/>
</dbReference>
<dbReference type="GO" id="GO:0098793">
    <property type="term" value="C:presynapse"/>
    <property type="evidence" value="ECO:0000315"/>
    <property type="project" value="MGI"/>
</dbReference>
<dbReference type="GO" id="GO:0019904">
    <property type="term" value="F:protein domain specific binding"/>
    <property type="evidence" value="ECO:0000314"/>
    <property type="project" value="MGI"/>
</dbReference>
<dbReference type="GO" id="GO:0021549">
    <property type="term" value="P:cerebellum development"/>
    <property type="evidence" value="ECO:0000315"/>
    <property type="project" value="MGI"/>
</dbReference>
<dbReference type="GO" id="GO:0021542">
    <property type="term" value="P:dentate gyrus development"/>
    <property type="evidence" value="ECO:0000315"/>
    <property type="project" value="MGI"/>
</dbReference>
<dbReference type="GO" id="GO:0007214">
    <property type="term" value="P:gamma-aminobutyric acid signaling pathway"/>
    <property type="evidence" value="ECO:0000315"/>
    <property type="project" value="MGI"/>
</dbReference>
<dbReference type="GO" id="GO:0010467">
    <property type="term" value="P:gene expression"/>
    <property type="evidence" value="ECO:0000315"/>
    <property type="project" value="MGI"/>
</dbReference>
<dbReference type="GO" id="GO:0014047">
    <property type="term" value="P:glutamate secretion"/>
    <property type="evidence" value="ECO:0000315"/>
    <property type="project" value="MGI"/>
</dbReference>
<dbReference type="GO" id="GO:0048872">
    <property type="term" value="P:homeostasis of number of cells"/>
    <property type="evidence" value="ECO:0000315"/>
    <property type="project" value="MGI"/>
</dbReference>
<dbReference type="GO" id="GO:0050776">
    <property type="term" value="P:regulation of immune response"/>
    <property type="evidence" value="ECO:0007669"/>
    <property type="project" value="InterPro"/>
</dbReference>
<dbReference type="GO" id="GO:0006950">
    <property type="term" value="P:response to stress"/>
    <property type="evidence" value="ECO:0000315"/>
    <property type="project" value="MGI"/>
</dbReference>
<dbReference type="GO" id="GO:0035176">
    <property type="term" value="P:social behavior"/>
    <property type="evidence" value="ECO:0000315"/>
    <property type="project" value="MGI"/>
</dbReference>
<dbReference type="GO" id="GO:0008542">
    <property type="term" value="P:visual learning"/>
    <property type="evidence" value="ECO:0000315"/>
    <property type="project" value="MGI"/>
</dbReference>
<dbReference type="InterPro" id="IPR029198">
    <property type="entry name" value="AJAP1_PANP_C"/>
</dbReference>
<dbReference type="InterPro" id="IPR039628">
    <property type="entry name" value="PIANP"/>
</dbReference>
<dbReference type="PANTHER" id="PTHR32023">
    <property type="entry name" value="PILR ALPHA-ASSOCIATED NEURAL PROTEIN"/>
    <property type="match status" value="1"/>
</dbReference>
<dbReference type="PANTHER" id="PTHR32023:SF2">
    <property type="entry name" value="PILR ALPHA-ASSOCIATED NEURAL PROTEIN"/>
    <property type="match status" value="1"/>
</dbReference>
<dbReference type="Pfam" id="PF15298">
    <property type="entry name" value="AJAP1_PANP_C"/>
    <property type="match status" value="1"/>
</dbReference>
<protein>
    <recommendedName>
        <fullName>PILR alpha-associated neural protein</fullName>
    </recommendedName>
    <alternativeName>
        <fullName>Brain protein 1</fullName>
    </alternativeName>
    <alternativeName>
        <fullName>PILR-associating neural protein</fullName>
    </alternativeName>
    <alternativeName>
        <fullName>Paired immunoglobin-like type 2 receptor-associating neural protein</fullName>
    </alternativeName>
</protein>
<name>PIANP_MOUSE</name>
<comment type="function">
    <text evidence="3">Acts as a ligand for PILRA in neuronal tissues, where it may be involved in immune regulation.</text>
</comment>
<comment type="subcellular location">
    <subcellularLocation>
        <location evidence="4">Membrane</location>
        <topology evidence="4">Single-pass type I membrane protein</topology>
    </subcellularLocation>
</comment>
<comment type="tissue specificity">
    <text evidence="3">Mainly expressed in brain and spinal cord. Weak expression also detected in heart, kidney, spleen and lymph node. Virtually no expression detected in liver and embryo relative to brain.</text>
</comment>
<comment type="PTM">
    <text evidence="3">O-glycosylation at Thr-136 is essential for recognition by PILRA.</text>
</comment>
<comment type="sequence caution" evidence="4">
    <conflict type="miscellaneous discrepancy">
        <sequence resource="EMBL-CDS" id="AAQ11190"/>
    </conflict>
    <text>Chimeric cDNA.</text>
</comment>
<feature type="signal peptide" evidence="1">
    <location>
        <begin position="1"/>
        <end position="27"/>
    </location>
</feature>
<feature type="chain" id="PRO_0000285966" description="PILR alpha-associated neural protein">
    <location>
        <begin position="28"/>
        <end position="278"/>
    </location>
</feature>
<feature type="topological domain" description="Extracellular" evidence="1">
    <location>
        <begin position="28"/>
        <end position="174"/>
    </location>
</feature>
<feature type="transmembrane region" description="Helical" evidence="1">
    <location>
        <begin position="175"/>
        <end position="195"/>
    </location>
</feature>
<feature type="topological domain" description="Cytoplasmic" evidence="1">
    <location>
        <begin position="196"/>
        <end position="278"/>
    </location>
</feature>
<feature type="region of interest" description="Disordered" evidence="2">
    <location>
        <begin position="25"/>
        <end position="93"/>
    </location>
</feature>
<feature type="region of interest" description="Disordered" evidence="2">
    <location>
        <begin position="206"/>
        <end position="278"/>
    </location>
</feature>
<feature type="compositionally biased region" description="Polar residues" evidence="2">
    <location>
        <begin position="209"/>
        <end position="225"/>
    </location>
</feature>
<feature type="glycosylation site" description="O-linked (GalNAc...) threonine" evidence="3">
    <location>
        <position position="136"/>
    </location>
</feature>
<feature type="sequence conflict" description="In Ref. 2; BAC38721." evidence="4" ref="2">
    <original>S</original>
    <variation>C</variation>
    <location>
        <position position="29"/>
    </location>
</feature>
<feature type="sequence conflict" description="In Ref. 2; BAC38721." evidence="4" ref="2">
    <original>RQ</original>
    <variation>WK</variation>
    <location>
        <begin position="72"/>
        <end position="73"/>
    </location>
</feature>
<feature type="sequence conflict" description="In Ref. 2; BAE28500." evidence="4" ref="2">
    <original>S</original>
    <variation>P</variation>
    <location>
        <position position="94"/>
    </location>
</feature>
<feature type="sequence conflict" description="In Ref. 2; BAC38721." evidence="4" ref="2">
    <original>F</original>
    <variation>L</variation>
    <location>
        <position position="165"/>
    </location>
</feature>
<feature type="sequence conflict" description="In Ref. 2; BAC38721." evidence="4" ref="2">
    <original>Q</original>
    <variation>K</variation>
    <location>
        <position position="175"/>
    </location>
</feature>
<gene>
    <name type="primary">Pianp</name>
    <name type="synonym">Panp</name>
</gene>
<evidence type="ECO:0000255" key="1"/>
<evidence type="ECO:0000256" key="2">
    <source>
        <dbReference type="SAM" id="MobiDB-lite"/>
    </source>
</evidence>
<evidence type="ECO:0000269" key="3">
    <source>
    </source>
</evidence>
<evidence type="ECO:0000305" key="4"/>
<reference key="1">
    <citation type="journal article" date="2011" name="Biochem. Biophys. Res. Commun.">
        <title>PANP is a novel O-glycosylated PILRalpha ligand expressed in neural tissues.</title>
        <authorList>
            <person name="Kogure A."/>
            <person name="Shiratori I."/>
            <person name="Wang J."/>
            <person name="Lanier L.L."/>
            <person name="Arase H."/>
        </authorList>
    </citation>
    <scope>NUCLEOTIDE SEQUENCE [MRNA]</scope>
    <scope>FUNCTION</scope>
    <scope>TISSUE SPECIFICITY</scope>
    <scope>GLYCOSYLATION AT THR-136</scope>
</reference>
<reference key="2">
    <citation type="journal article" date="2005" name="Science">
        <title>The transcriptional landscape of the mammalian genome.</title>
        <authorList>
            <person name="Carninci P."/>
            <person name="Kasukawa T."/>
            <person name="Katayama S."/>
            <person name="Gough J."/>
            <person name="Frith M.C."/>
            <person name="Maeda N."/>
            <person name="Oyama R."/>
            <person name="Ravasi T."/>
            <person name="Lenhard B."/>
            <person name="Wells C."/>
            <person name="Kodzius R."/>
            <person name="Shimokawa K."/>
            <person name="Bajic V.B."/>
            <person name="Brenner S.E."/>
            <person name="Batalov S."/>
            <person name="Forrest A.R."/>
            <person name="Zavolan M."/>
            <person name="Davis M.J."/>
            <person name="Wilming L.G."/>
            <person name="Aidinis V."/>
            <person name="Allen J.E."/>
            <person name="Ambesi-Impiombato A."/>
            <person name="Apweiler R."/>
            <person name="Aturaliya R.N."/>
            <person name="Bailey T.L."/>
            <person name="Bansal M."/>
            <person name="Baxter L."/>
            <person name="Beisel K.W."/>
            <person name="Bersano T."/>
            <person name="Bono H."/>
            <person name="Chalk A.M."/>
            <person name="Chiu K.P."/>
            <person name="Choudhary V."/>
            <person name="Christoffels A."/>
            <person name="Clutterbuck D.R."/>
            <person name="Crowe M.L."/>
            <person name="Dalla E."/>
            <person name="Dalrymple B.P."/>
            <person name="de Bono B."/>
            <person name="Della Gatta G."/>
            <person name="di Bernardo D."/>
            <person name="Down T."/>
            <person name="Engstrom P."/>
            <person name="Fagiolini M."/>
            <person name="Faulkner G."/>
            <person name="Fletcher C.F."/>
            <person name="Fukushima T."/>
            <person name="Furuno M."/>
            <person name="Futaki S."/>
            <person name="Gariboldi M."/>
            <person name="Georgii-Hemming P."/>
            <person name="Gingeras T.R."/>
            <person name="Gojobori T."/>
            <person name="Green R.E."/>
            <person name="Gustincich S."/>
            <person name="Harbers M."/>
            <person name="Hayashi Y."/>
            <person name="Hensch T.K."/>
            <person name="Hirokawa N."/>
            <person name="Hill D."/>
            <person name="Huminiecki L."/>
            <person name="Iacono M."/>
            <person name="Ikeo K."/>
            <person name="Iwama A."/>
            <person name="Ishikawa T."/>
            <person name="Jakt M."/>
            <person name="Kanapin A."/>
            <person name="Katoh M."/>
            <person name="Kawasawa Y."/>
            <person name="Kelso J."/>
            <person name="Kitamura H."/>
            <person name="Kitano H."/>
            <person name="Kollias G."/>
            <person name="Krishnan S.P."/>
            <person name="Kruger A."/>
            <person name="Kummerfeld S.K."/>
            <person name="Kurochkin I.V."/>
            <person name="Lareau L.F."/>
            <person name="Lazarevic D."/>
            <person name="Lipovich L."/>
            <person name="Liu J."/>
            <person name="Liuni S."/>
            <person name="McWilliam S."/>
            <person name="Madan Babu M."/>
            <person name="Madera M."/>
            <person name="Marchionni L."/>
            <person name="Matsuda H."/>
            <person name="Matsuzawa S."/>
            <person name="Miki H."/>
            <person name="Mignone F."/>
            <person name="Miyake S."/>
            <person name="Morris K."/>
            <person name="Mottagui-Tabar S."/>
            <person name="Mulder N."/>
            <person name="Nakano N."/>
            <person name="Nakauchi H."/>
            <person name="Ng P."/>
            <person name="Nilsson R."/>
            <person name="Nishiguchi S."/>
            <person name="Nishikawa S."/>
            <person name="Nori F."/>
            <person name="Ohara O."/>
            <person name="Okazaki Y."/>
            <person name="Orlando V."/>
            <person name="Pang K.C."/>
            <person name="Pavan W.J."/>
            <person name="Pavesi G."/>
            <person name="Pesole G."/>
            <person name="Petrovsky N."/>
            <person name="Piazza S."/>
            <person name="Reed J."/>
            <person name="Reid J.F."/>
            <person name="Ring B.Z."/>
            <person name="Ringwald M."/>
            <person name="Rost B."/>
            <person name="Ruan Y."/>
            <person name="Salzberg S.L."/>
            <person name="Sandelin A."/>
            <person name="Schneider C."/>
            <person name="Schoenbach C."/>
            <person name="Sekiguchi K."/>
            <person name="Semple C.A."/>
            <person name="Seno S."/>
            <person name="Sessa L."/>
            <person name="Sheng Y."/>
            <person name="Shibata Y."/>
            <person name="Shimada H."/>
            <person name="Shimada K."/>
            <person name="Silva D."/>
            <person name="Sinclair B."/>
            <person name="Sperling S."/>
            <person name="Stupka E."/>
            <person name="Sugiura K."/>
            <person name="Sultana R."/>
            <person name="Takenaka Y."/>
            <person name="Taki K."/>
            <person name="Tammoja K."/>
            <person name="Tan S.L."/>
            <person name="Tang S."/>
            <person name="Taylor M.S."/>
            <person name="Tegner J."/>
            <person name="Teichmann S.A."/>
            <person name="Ueda H.R."/>
            <person name="van Nimwegen E."/>
            <person name="Verardo R."/>
            <person name="Wei C.L."/>
            <person name="Yagi K."/>
            <person name="Yamanishi H."/>
            <person name="Zabarovsky E."/>
            <person name="Zhu S."/>
            <person name="Zimmer A."/>
            <person name="Hide W."/>
            <person name="Bult C."/>
            <person name="Grimmond S.M."/>
            <person name="Teasdale R.D."/>
            <person name="Liu E.T."/>
            <person name="Brusic V."/>
            <person name="Quackenbush J."/>
            <person name="Wahlestedt C."/>
            <person name="Mattick J.S."/>
            <person name="Hume D.A."/>
            <person name="Kai C."/>
            <person name="Sasaki D."/>
            <person name="Tomaru Y."/>
            <person name="Fukuda S."/>
            <person name="Kanamori-Katayama M."/>
            <person name="Suzuki M."/>
            <person name="Aoki J."/>
            <person name="Arakawa T."/>
            <person name="Iida J."/>
            <person name="Imamura K."/>
            <person name="Itoh M."/>
            <person name="Kato T."/>
            <person name="Kawaji H."/>
            <person name="Kawagashira N."/>
            <person name="Kawashima T."/>
            <person name="Kojima M."/>
            <person name="Kondo S."/>
            <person name="Konno H."/>
            <person name="Nakano K."/>
            <person name="Ninomiya N."/>
            <person name="Nishio T."/>
            <person name="Okada M."/>
            <person name="Plessy C."/>
            <person name="Shibata K."/>
            <person name="Shiraki T."/>
            <person name="Suzuki S."/>
            <person name="Tagami M."/>
            <person name="Waki K."/>
            <person name="Watahiki A."/>
            <person name="Okamura-Oho Y."/>
            <person name="Suzuki H."/>
            <person name="Kawai J."/>
            <person name="Hayashizaki Y."/>
        </authorList>
    </citation>
    <scope>NUCLEOTIDE SEQUENCE [LARGE SCALE MRNA]</scope>
    <source>
        <strain>C57BL/6J</strain>
        <tissue>Embryonic spinal cord</tissue>
    </source>
</reference>
<reference key="3">
    <citation type="journal article" date="2004" name="Genome Res.">
        <title>The status, quality, and expansion of the NIH full-length cDNA project: the Mammalian Gene Collection (MGC).</title>
        <authorList>
            <consortium name="The MGC Project Team"/>
        </authorList>
    </citation>
    <scope>NUCLEOTIDE SEQUENCE [LARGE SCALE MRNA]</scope>
    <source>
        <strain>C57BL/6J</strain>
        <tissue>Brain</tissue>
    </source>
</reference>
<reference key="4">
    <citation type="submission" date="2002-08" db="EMBL/GenBank/DDBJ databases">
        <title>The cloning of mouse brain protein 1.</title>
        <authorList>
            <person name="Liu Z."/>
            <person name="Li Y."/>
        </authorList>
    </citation>
    <scope>NUCLEOTIDE SEQUENCE [MRNA] OF 103-278</scope>
    <source>
        <strain>C57BL/6J</strain>
        <tissue>Brain</tissue>
    </source>
</reference>
<reference key="5">
    <citation type="journal article" date="2010" name="Cell">
        <title>A tissue-specific atlas of mouse protein phosphorylation and expression.</title>
        <authorList>
            <person name="Huttlin E.L."/>
            <person name="Jedrychowski M.P."/>
            <person name="Elias J.E."/>
            <person name="Goswami T."/>
            <person name="Rad R."/>
            <person name="Beausoleil S.A."/>
            <person name="Villen J."/>
            <person name="Haas W."/>
            <person name="Sowa M.E."/>
            <person name="Gygi S.P."/>
        </authorList>
    </citation>
    <scope>IDENTIFICATION BY MASS SPECTROMETRY [LARGE SCALE ANALYSIS]</scope>
    <source>
        <tissue>Brain</tissue>
    </source>
</reference>
<accession>Q6P1B3</accession>
<accession>Q3UFR0</accession>
<accession>Q71A40</accession>
<accession>Q8BHU8</accession>
<keyword id="KW-0325">Glycoprotein</keyword>
<keyword id="KW-0472">Membrane</keyword>
<keyword id="KW-1185">Reference proteome</keyword>
<keyword id="KW-0732">Signal</keyword>
<keyword id="KW-0812">Transmembrane</keyword>
<keyword id="KW-1133">Transmembrane helix</keyword>
<organism>
    <name type="scientific">Mus musculus</name>
    <name type="common">Mouse</name>
    <dbReference type="NCBI Taxonomy" id="10090"/>
    <lineage>
        <taxon>Eukaryota</taxon>
        <taxon>Metazoa</taxon>
        <taxon>Chordata</taxon>
        <taxon>Craniata</taxon>
        <taxon>Vertebrata</taxon>
        <taxon>Euteleostomi</taxon>
        <taxon>Mammalia</taxon>
        <taxon>Eutheria</taxon>
        <taxon>Euarchontoglires</taxon>
        <taxon>Glires</taxon>
        <taxon>Rodentia</taxon>
        <taxon>Myomorpha</taxon>
        <taxon>Muroidea</taxon>
        <taxon>Muridae</taxon>
        <taxon>Murinae</taxon>
        <taxon>Mus</taxon>
        <taxon>Mus</taxon>
    </lineage>
</organism>
<proteinExistence type="evidence at protein level"/>